<dbReference type="EMBL" id="CP000325">
    <property type="protein sequence ID" value="ABL06634.1"/>
    <property type="molecule type" value="Genomic_DNA"/>
</dbReference>
<dbReference type="RefSeq" id="WP_011742229.1">
    <property type="nucleotide sequence ID" value="NC_008611.1"/>
</dbReference>
<dbReference type="SMR" id="A0PWB5"/>
<dbReference type="GeneID" id="93435543"/>
<dbReference type="KEGG" id="mul:MUL_4702"/>
<dbReference type="eggNOG" id="ENOG5033AVR">
    <property type="taxonomic scope" value="Bacteria"/>
</dbReference>
<dbReference type="HOGENOM" id="CLU_203263_0_0_11"/>
<dbReference type="Proteomes" id="UP000000765">
    <property type="component" value="Chromosome"/>
</dbReference>
<dbReference type="GO" id="GO:0015934">
    <property type="term" value="C:large ribosomal subunit"/>
    <property type="evidence" value="ECO:0007669"/>
    <property type="project" value="InterPro"/>
</dbReference>
<dbReference type="GO" id="GO:0003735">
    <property type="term" value="F:structural constituent of ribosome"/>
    <property type="evidence" value="ECO:0007669"/>
    <property type="project" value="InterPro"/>
</dbReference>
<dbReference type="GO" id="GO:0006412">
    <property type="term" value="P:translation"/>
    <property type="evidence" value="ECO:0007669"/>
    <property type="project" value="UniProtKB-UniRule"/>
</dbReference>
<dbReference type="HAMAP" id="MF_00340">
    <property type="entry name" value="Ribosomal_bL32"/>
    <property type="match status" value="1"/>
</dbReference>
<dbReference type="InterPro" id="IPR002677">
    <property type="entry name" value="Ribosomal_bL32"/>
</dbReference>
<dbReference type="InterPro" id="IPR011332">
    <property type="entry name" value="Ribosomal_zn-bd"/>
</dbReference>
<dbReference type="NCBIfam" id="TIGR01031">
    <property type="entry name" value="rpmF_bact"/>
    <property type="match status" value="1"/>
</dbReference>
<dbReference type="Pfam" id="PF01783">
    <property type="entry name" value="Ribosomal_L32p"/>
    <property type="match status" value="1"/>
</dbReference>
<dbReference type="SUPFAM" id="SSF57829">
    <property type="entry name" value="Zn-binding ribosomal proteins"/>
    <property type="match status" value="1"/>
</dbReference>
<reference key="1">
    <citation type="journal article" date="2007" name="Genome Res.">
        <title>Reductive evolution and niche adaptation inferred from the genome of Mycobacterium ulcerans, the causative agent of Buruli ulcer.</title>
        <authorList>
            <person name="Stinear T.P."/>
            <person name="Seemann T."/>
            <person name="Pidot S."/>
            <person name="Frigui W."/>
            <person name="Reysset G."/>
            <person name="Garnier T."/>
            <person name="Meurice G."/>
            <person name="Simon D."/>
            <person name="Bouchier C."/>
            <person name="Ma L."/>
            <person name="Tichit M."/>
            <person name="Porter J.L."/>
            <person name="Ryan J."/>
            <person name="Johnson P.D.R."/>
            <person name="Davies J.K."/>
            <person name="Jenkin G.A."/>
            <person name="Small P.L.C."/>
            <person name="Jones L.M."/>
            <person name="Tekaia F."/>
            <person name="Laval F."/>
            <person name="Daffe M."/>
            <person name="Parkhill J."/>
            <person name="Cole S.T."/>
        </authorList>
    </citation>
    <scope>NUCLEOTIDE SEQUENCE [LARGE SCALE GENOMIC DNA]</scope>
    <source>
        <strain>Agy99</strain>
    </source>
</reference>
<sequence length="57" mass="6524">MATPKRRMSRANTRSRRSQWKATKAELVGVTVGGQKHKVPRRLLKAARLGLIDLDRR</sequence>
<comment type="similarity">
    <text evidence="1">Belongs to the bacterial ribosomal protein bL32 family.</text>
</comment>
<name>RL32_MYCUA</name>
<feature type="chain" id="PRO_0000296509" description="Large ribosomal subunit protein bL32">
    <location>
        <begin position="1"/>
        <end position="57"/>
    </location>
</feature>
<feature type="region of interest" description="Disordered" evidence="2">
    <location>
        <begin position="1"/>
        <end position="21"/>
    </location>
</feature>
<feature type="compositionally biased region" description="Basic residues" evidence="2">
    <location>
        <begin position="1"/>
        <end position="19"/>
    </location>
</feature>
<keyword id="KW-0687">Ribonucleoprotein</keyword>
<keyword id="KW-0689">Ribosomal protein</keyword>
<organism>
    <name type="scientific">Mycobacterium ulcerans (strain Agy99)</name>
    <dbReference type="NCBI Taxonomy" id="362242"/>
    <lineage>
        <taxon>Bacteria</taxon>
        <taxon>Bacillati</taxon>
        <taxon>Actinomycetota</taxon>
        <taxon>Actinomycetes</taxon>
        <taxon>Mycobacteriales</taxon>
        <taxon>Mycobacteriaceae</taxon>
        <taxon>Mycobacterium</taxon>
        <taxon>Mycobacterium ulcerans group</taxon>
    </lineage>
</organism>
<gene>
    <name evidence="1" type="primary">rpmF</name>
    <name type="ordered locus">MUL_4702</name>
</gene>
<proteinExistence type="inferred from homology"/>
<accession>A0PWB5</accession>
<evidence type="ECO:0000255" key="1">
    <source>
        <dbReference type="HAMAP-Rule" id="MF_00340"/>
    </source>
</evidence>
<evidence type="ECO:0000256" key="2">
    <source>
        <dbReference type="SAM" id="MobiDB-lite"/>
    </source>
</evidence>
<evidence type="ECO:0000305" key="3"/>
<protein>
    <recommendedName>
        <fullName evidence="1">Large ribosomal subunit protein bL32</fullName>
    </recommendedName>
    <alternativeName>
        <fullName evidence="3">50S ribosomal protein L32</fullName>
    </alternativeName>
</protein>